<feature type="chain" id="PRO_0000124958" description="Large ribosomal subunit protein uL5">
    <location>
        <begin position="1"/>
        <end position="179"/>
    </location>
</feature>
<name>RL5_NEIMB</name>
<evidence type="ECO:0000255" key="1">
    <source>
        <dbReference type="HAMAP-Rule" id="MF_01333"/>
    </source>
</evidence>
<evidence type="ECO:0000305" key="2"/>
<proteinExistence type="inferred from homology"/>
<sequence length="179" mass="20323">MARLREFYKETVVPELVKQFGYKSVMEVPRIEKITLNMGVGEAVADKKVMEHAVSDLEKIAGQKPVVTVARKSIAGFKIRDNYPVGCKVTLRRDQMFEFLDRLITIALPRVRDFRGVSGKSFDGRGNYNMGVREQIIFPEIEYDKIDALRGLNITITTTAKTDEEAKALLSLFKFPFKG</sequence>
<dbReference type="EMBL" id="AE002098">
    <property type="protein sequence ID" value="AAF40612.1"/>
    <property type="molecule type" value="Genomic_DNA"/>
</dbReference>
<dbReference type="PIR" id="D81232">
    <property type="entry name" value="D81232"/>
</dbReference>
<dbReference type="RefSeq" id="NP_273212.1">
    <property type="nucleotide sequence ID" value="NC_003112.2"/>
</dbReference>
<dbReference type="RefSeq" id="WP_002215436.1">
    <property type="nucleotide sequence ID" value="NC_003112.2"/>
</dbReference>
<dbReference type="SMR" id="Q9K1I4"/>
<dbReference type="FunCoup" id="Q9K1I4">
    <property type="interactions" value="586"/>
</dbReference>
<dbReference type="STRING" id="122586.NMB0154"/>
<dbReference type="PaxDb" id="122586-NMB0154"/>
<dbReference type="KEGG" id="nme:NMB0154"/>
<dbReference type="PATRIC" id="fig|122586.8.peg.195"/>
<dbReference type="HOGENOM" id="CLU_061015_2_1_4"/>
<dbReference type="InParanoid" id="Q9K1I4"/>
<dbReference type="OrthoDB" id="9806626at2"/>
<dbReference type="Proteomes" id="UP000000425">
    <property type="component" value="Chromosome"/>
</dbReference>
<dbReference type="GO" id="GO:0022625">
    <property type="term" value="C:cytosolic large ribosomal subunit"/>
    <property type="evidence" value="ECO:0000318"/>
    <property type="project" value="GO_Central"/>
</dbReference>
<dbReference type="GO" id="GO:0003723">
    <property type="term" value="F:RNA binding"/>
    <property type="evidence" value="ECO:0000318"/>
    <property type="project" value="GO_Central"/>
</dbReference>
<dbReference type="GO" id="GO:0019843">
    <property type="term" value="F:rRNA binding"/>
    <property type="evidence" value="ECO:0007669"/>
    <property type="project" value="UniProtKB-UniRule"/>
</dbReference>
<dbReference type="GO" id="GO:0003735">
    <property type="term" value="F:structural constituent of ribosome"/>
    <property type="evidence" value="ECO:0000318"/>
    <property type="project" value="GO_Central"/>
</dbReference>
<dbReference type="GO" id="GO:0000049">
    <property type="term" value="F:tRNA binding"/>
    <property type="evidence" value="ECO:0007669"/>
    <property type="project" value="UniProtKB-UniRule"/>
</dbReference>
<dbReference type="GO" id="GO:0006412">
    <property type="term" value="P:translation"/>
    <property type="evidence" value="ECO:0000318"/>
    <property type="project" value="GO_Central"/>
</dbReference>
<dbReference type="FunFam" id="3.30.1440.10:FF:000001">
    <property type="entry name" value="50S ribosomal protein L5"/>
    <property type="match status" value="1"/>
</dbReference>
<dbReference type="Gene3D" id="3.30.1440.10">
    <property type="match status" value="1"/>
</dbReference>
<dbReference type="HAMAP" id="MF_01333_B">
    <property type="entry name" value="Ribosomal_uL5_B"/>
    <property type="match status" value="1"/>
</dbReference>
<dbReference type="InterPro" id="IPR002132">
    <property type="entry name" value="Ribosomal_uL5"/>
</dbReference>
<dbReference type="InterPro" id="IPR020930">
    <property type="entry name" value="Ribosomal_uL5_bac-type"/>
</dbReference>
<dbReference type="InterPro" id="IPR031309">
    <property type="entry name" value="Ribosomal_uL5_C"/>
</dbReference>
<dbReference type="InterPro" id="IPR020929">
    <property type="entry name" value="Ribosomal_uL5_CS"/>
</dbReference>
<dbReference type="InterPro" id="IPR022803">
    <property type="entry name" value="Ribosomal_uL5_dom_sf"/>
</dbReference>
<dbReference type="InterPro" id="IPR031310">
    <property type="entry name" value="Ribosomal_uL5_N"/>
</dbReference>
<dbReference type="NCBIfam" id="NF000585">
    <property type="entry name" value="PRK00010.1"/>
    <property type="match status" value="1"/>
</dbReference>
<dbReference type="PANTHER" id="PTHR11994">
    <property type="entry name" value="60S RIBOSOMAL PROTEIN L11-RELATED"/>
    <property type="match status" value="1"/>
</dbReference>
<dbReference type="Pfam" id="PF00281">
    <property type="entry name" value="Ribosomal_L5"/>
    <property type="match status" value="1"/>
</dbReference>
<dbReference type="Pfam" id="PF00673">
    <property type="entry name" value="Ribosomal_L5_C"/>
    <property type="match status" value="1"/>
</dbReference>
<dbReference type="PIRSF" id="PIRSF002161">
    <property type="entry name" value="Ribosomal_L5"/>
    <property type="match status" value="1"/>
</dbReference>
<dbReference type="SUPFAM" id="SSF55282">
    <property type="entry name" value="RL5-like"/>
    <property type="match status" value="1"/>
</dbReference>
<dbReference type="PROSITE" id="PS00358">
    <property type="entry name" value="RIBOSOMAL_L5"/>
    <property type="match status" value="1"/>
</dbReference>
<keyword id="KW-1185">Reference proteome</keyword>
<keyword id="KW-0687">Ribonucleoprotein</keyword>
<keyword id="KW-0689">Ribosomal protein</keyword>
<keyword id="KW-0694">RNA-binding</keyword>
<keyword id="KW-0699">rRNA-binding</keyword>
<keyword id="KW-0820">tRNA-binding</keyword>
<accession>Q9K1I4</accession>
<reference key="1">
    <citation type="journal article" date="2000" name="Science">
        <title>Complete genome sequence of Neisseria meningitidis serogroup B strain MC58.</title>
        <authorList>
            <person name="Tettelin H."/>
            <person name="Saunders N.J."/>
            <person name="Heidelberg J.F."/>
            <person name="Jeffries A.C."/>
            <person name="Nelson K.E."/>
            <person name="Eisen J.A."/>
            <person name="Ketchum K.A."/>
            <person name="Hood D.W."/>
            <person name="Peden J.F."/>
            <person name="Dodson R.J."/>
            <person name="Nelson W.C."/>
            <person name="Gwinn M.L."/>
            <person name="DeBoy R.T."/>
            <person name="Peterson J.D."/>
            <person name="Hickey E.K."/>
            <person name="Haft D.H."/>
            <person name="Salzberg S.L."/>
            <person name="White O."/>
            <person name="Fleischmann R.D."/>
            <person name="Dougherty B.A."/>
            <person name="Mason T.M."/>
            <person name="Ciecko A."/>
            <person name="Parksey D.S."/>
            <person name="Blair E."/>
            <person name="Cittone H."/>
            <person name="Clark E.B."/>
            <person name="Cotton M.D."/>
            <person name="Utterback T.R."/>
            <person name="Khouri H.M."/>
            <person name="Qin H."/>
            <person name="Vamathevan J.J."/>
            <person name="Gill J."/>
            <person name="Scarlato V."/>
            <person name="Masignani V."/>
            <person name="Pizza M."/>
            <person name="Grandi G."/>
            <person name="Sun L."/>
            <person name="Smith H.O."/>
            <person name="Fraser C.M."/>
            <person name="Moxon E.R."/>
            <person name="Rappuoli R."/>
            <person name="Venter J.C."/>
        </authorList>
    </citation>
    <scope>NUCLEOTIDE SEQUENCE [LARGE SCALE GENOMIC DNA]</scope>
    <source>
        <strain>ATCC BAA-335 / MC58</strain>
    </source>
</reference>
<protein>
    <recommendedName>
        <fullName evidence="1">Large ribosomal subunit protein uL5</fullName>
    </recommendedName>
    <alternativeName>
        <fullName evidence="2">50S ribosomal protein L5</fullName>
    </alternativeName>
</protein>
<organism>
    <name type="scientific">Neisseria meningitidis serogroup B (strain ATCC BAA-335 / MC58)</name>
    <dbReference type="NCBI Taxonomy" id="122586"/>
    <lineage>
        <taxon>Bacteria</taxon>
        <taxon>Pseudomonadati</taxon>
        <taxon>Pseudomonadota</taxon>
        <taxon>Betaproteobacteria</taxon>
        <taxon>Neisseriales</taxon>
        <taxon>Neisseriaceae</taxon>
        <taxon>Neisseria</taxon>
    </lineage>
</organism>
<comment type="function">
    <text evidence="1">This is one of the proteins that bind and probably mediate the attachment of the 5S RNA into the large ribosomal subunit, where it forms part of the central protuberance. In the 70S ribosome it contacts protein S13 of the 30S subunit (bridge B1b), connecting the 2 subunits; this bridge is implicated in subunit movement. Contacts the P site tRNA; the 5S rRNA and some of its associated proteins might help stabilize positioning of ribosome-bound tRNAs.</text>
</comment>
<comment type="subunit">
    <text evidence="1">Part of the 50S ribosomal subunit; part of the 5S rRNA/L5/L18/L25 subcomplex. Contacts the 5S rRNA and the P site tRNA. Forms a bridge to the 30S subunit in the 70S ribosome.</text>
</comment>
<comment type="similarity">
    <text evidence="1">Belongs to the universal ribosomal protein uL5 family.</text>
</comment>
<gene>
    <name evidence="1" type="primary">rplE</name>
    <name type="ordered locus">NMB0154</name>
</gene>